<sequence>MRHYELMVLLDPDVEERSVEPSLDQFLNVVRQDGGTVQKIDVWGRRRLAYEIRKKSEGIYAVIDLIANPQTVKELDRQLNLNENVLRTKLVRPDAR</sequence>
<protein>
    <recommendedName>
        <fullName evidence="1">Small ribosomal subunit protein bS6</fullName>
    </recommendedName>
    <alternativeName>
        <fullName evidence="2">30S ribosomal protein S6</fullName>
    </alternativeName>
</protein>
<accession>A0LWU5</accession>
<feature type="chain" id="PRO_1000005204" description="Small ribosomal subunit protein bS6">
    <location>
        <begin position="1"/>
        <end position="96"/>
    </location>
</feature>
<keyword id="KW-1185">Reference proteome</keyword>
<keyword id="KW-0687">Ribonucleoprotein</keyword>
<keyword id="KW-0689">Ribosomal protein</keyword>
<keyword id="KW-0694">RNA-binding</keyword>
<keyword id="KW-0699">rRNA-binding</keyword>
<organism>
    <name type="scientific">Acidothermus cellulolyticus (strain ATCC 43068 / DSM 8971 / 11B)</name>
    <dbReference type="NCBI Taxonomy" id="351607"/>
    <lineage>
        <taxon>Bacteria</taxon>
        <taxon>Bacillati</taxon>
        <taxon>Actinomycetota</taxon>
        <taxon>Actinomycetes</taxon>
        <taxon>Acidothermales</taxon>
        <taxon>Acidothermaceae</taxon>
        <taxon>Acidothermus</taxon>
    </lineage>
</organism>
<proteinExistence type="inferred from homology"/>
<comment type="function">
    <text evidence="1">Binds together with bS18 to 16S ribosomal RNA.</text>
</comment>
<comment type="similarity">
    <text evidence="1">Belongs to the bacterial ribosomal protein bS6 family.</text>
</comment>
<evidence type="ECO:0000255" key="1">
    <source>
        <dbReference type="HAMAP-Rule" id="MF_00360"/>
    </source>
</evidence>
<evidence type="ECO:0000305" key="2"/>
<reference key="1">
    <citation type="journal article" date="2009" name="Genome Res.">
        <title>Complete genome of the cellulolytic thermophile Acidothermus cellulolyticus 11B provides insights into its ecophysiological and evolutionary adaptations.</title>
        <authorList>
            <person name="Barabote R.D."/>
            <person name="Xie G."/>
            <person name="Leu D.H."/>
            <person name="Normand P."/>
            <person name="Necsulea A."/>
            <person name="Daubin V."/>
            <person name="Medigue C."/>
            <person name="Adney W.S."/>
            <person name="Xu X.C."/>
            <person name="Lapidus A."/>
            <person name="Parales R.E."/>
            <person name="Detter C."/>
            <person name="Pujic P."/>
            <person name="Bruce D."/>
            <person name="Lavire C."/>
            <person name="Challacombe J.F."/>
            <person name="Brettin T.S."/>
            <person name="Berry A.M."/>
        </authorList>
    </citation>
    <scope>NUCLEOTIDE SEQUENCE [LARGE SCALE GENOMIC DNA]</scope>
    <source>
        <strain>ATCC 43068 / DSM 8971 / 11B</strain>
    </source>
</reference>
<name>RS6_ACIC1</name>
<gene>
    <name evidence="1" type="primary">rpsF</name>
    <name type="ordered locus">Acel_2133</name>
</gene>
<dbReference type="EMBL" id="CP000481">
    <property type="protein sequence ID" value="ABK53905.1"/>
    <property type="molecule type" value="Genomic_DNA"/>
</dbReference>
<dbReference type="RefSeq" id="WP_011720968.1">
    <property type="nucleotide sequence ID" value="NC_008578.1"/>
</dbReference>
<dbReference type="SMR" id="A0LWU5"/>
<dbReference type="FunCoup" id="A0LWU5">
    <property type="interactions" value="104"/>
</dbReference>
<dbReference type="STRING" id="351607.Acel_2133"/>
<dbReference type="KEGG" id="ace:Acel_2133"/>
<dbReference type="eggNOG" id="COG0360">
    <property type="taxonomic scope" value="Bacteria"/>
</dbReference>
<dbReference type="HOGENOM" id="CLU_113441_5_3_11"/>
<dbReference type="InParanoid" id="A0LWU5"/>
<dbReference type="OrthoDB" id="9812702at2"/>
<dbReference type="Proteomes" id="UP000008221">
    <property type="component" value="Chromosome"/>
</dbReference>
<dbReference type="GO" id="GO:0005737">
    <property type="term" value="C:cytoplasm"/>
    <property type="evidence" value="ECO:0007669"/>
    <property type="project" value="UniProtKB-ARBA"/>
</dbReference>
<dbReference type="GO" id="GO:1990904">
    <property type="term" value="C:ribonucleoprotein complex"/>
    <property type="evidence" value="ECO:0007669"/>
    <property type="project" value="UniProtKB-KW"/>
</dbReference>
<dbReference type="GO" id="GO:0005840">
    <property type="term" value="C:ribosome"/>
    <property type="evidence" value="ECO:0007669"/>
    <property type="project" value="UniProtKB-KW"/>
</dbReference>
<dbReference type="GO" id="GO:0070181">
    <property type="term" value="F:small ribosomal subunit rRNA binding"/>
    <property type="evidence" value="ECO:0007669"/>
    <property type="project" value="TreeGrafter"/>
</dbReference>
<dbReference type="GO" id="GO:0003735">
    <property type="term" value="F:structural constituent of ribosome"/>
    <property type="evidence" value="ECO:0007669"/>
    <property type="project" value="InterPro"/>
</dbReference>
<dbReference type="GO" id="GO:0006412">
    <property type="term" value="P:translation"/>
    <property type="evidence" value="ECO:0007669"/>
    <property type="project" value="UniProtKB-UniRule"/>
</dbReference>
<dbReference type="CDD" id="cd00473">
    <property type="entry name" value="bS6"/>
    <property type="match status" value="1"/>
</dbReference>
<dbReference type="FunFam" id="3.30.70.60:FF:000002">
    <property type="entry name" value="30S ribosomal protein S6"/>
    <property type="match status" value="1"/>
</dbReference>
<dbReference type="Gene3D" id="3.30.70.60">
    <property type="match status" value="1"/>
</dbReference>
<dbReference type="HAMAP" id="MF_00360">
    <property type="entry name" value="Ribosomal_bS6"/>
    <property type="match status" value="1"/>
</dbReference>
<dbReference type="InterPro" id="IPR000529">
    <property type="entry name" value="Ribosomal_bS6"/>
</dbReference>
<dbReference type="InterPro" id="IPR020815">
    <property type="entry name" value="Ribosomal_bS6_CS"/>
</dbReference>
<dbReference type="InterPro" id="IPR035980">
    <property type="entry name" value="Ribosomal_bS6_sf"/>
</dbReference>
<dbReference type="InterPro" id="IPR020814">
    <property type="entry name" value="Ribosomal_S6_plastid/chlpt"/>
</dbReference>
<dbReference type="InterPro" id="IPR014717">
    <property type="entry name" value="Transl_elong_EF1B/ribsomal_bS6"/>
</dbReference>
<dbReference type="NCBIfam" id="TIGR00166">
    <property type="entry name" value="S6"/>
    <property type="match status" value="1"/>
</dbReference>
<dbReference type="PANTHER" id="PTHR21011">
    <property type="entry name" value="MITOCHONDRIAL 28S RIBOSOMAL PROTEIN S6"/>
    <property type="match status" value="1"/>
</dbReference>
<dbReference type="PANTHER" id="PTHR21011:SF1">
    <property type="entry name" value="SMALL RIBOSOMAL SUBUNIT PROTEIN BS6M"/>
    <property type="match status" value="1"/>
</dbReference>
<dbReference type="Pfam" id="PF01250">
    <property type="entry name" value="Ribosomal_S6"/>
    <property type="match status" value="1"/>
</dbReference>
<dbReference type="SUPFAM" id="SSF54995">
    <property type="entry name" value="Ribosomal protein S6"/>
    <property type="match status" value="1"/>
</dbReference>
<dbReference type="PROSITE" id="PS01048">
    <property type="entry name" value="RIBOSOMAL_S6"/>
    <property type="match status" value="1"/>
</dbReference>